<evidence type="ECO:0000255" key="1">
    <source>
        <dbReference type="HAMAP-Rule" id="MF_00365"/>
    </source>
</evidence>
<keyword id="KW-0067">ATP-binding</keyword>
<keyword id="KW-0963">Cytoplasm</keyword>
<keyword id="KW-0227">DNA damage</keyword>
<keyword id="KW-0234">DNA repair</keyword>
<keyword id="KW-0235">DNA replication</keyword>
<keyword id="KW-0238">DNA-binding</keyword>
<keyword id="KW-0547">Nucleotide-binding</keyword>
<keyword id="KW-1185">Reference proteome</keyword>
<keyword id="KW-0742">SOS response</keyword>
<gene>
    <name evidence="1" type="primary">recF</name>
    <name type="ordered locus">jk0003</name>
</gene>
<comment type="function">
    <text evidence="1">The RecF protein is involved in DNA metabolism; it is required for DNA replication and normal SOS inducibility. RecF binds preferentially to single-stranded, linear DNA. It also seems to bind ATP.</text>
</comment>
<comment type="subcellular location">
    <subcellularLocation>
        <location evidence="1">Cytoplasm</location>
    </subcellularLocation>
</comment>
<comment type="similarity">
    <text evidence="1">Belongs to the RecF family.</text>
</comment>
<reference key="1">
    <citation type="journal article" date="2005" name="J. Bacteriol.">
        <title>Complete genome sequence and analysis of the multiresistant nosocomial pathogen Corynebacterium jeikeium K411, a lipid-requiring bacterium of the human skin flora.</title>
        <authorList>
            <person name="Tauch A."/>
            <person name="Kaiser O."/>
            <person name="Hain T."/>
            <person name="Goesmann A."/>
            <person name="Weisshaar B."/>
            <person name="Albersmeier A."/>
            <person name="Bekel T."/>
            <person name="Bischoff N."/>
            <person name="Brune I."/>
            <person name="Chakraborty T."/>
            <person name="Kalinowski J."/>
            <person name="Meyer F."/>
            <person name="Rupp O."/>
            <person name="Schneiker S."/>
            <person name="Viehoever P."/>
            <person name="Puehler A."/>
        </authorList>
    </citation>
    <scope>NUCLEOTIDE SEQUENCE [LARGE SCALE GENOMIC DNA]</scope>
    <source>
        <strain>K411</strain>
    </source>
</reference>
<dbReference type="EMBL" id="CR931997">
    <property type="protein sequence ID" value="CAI36152.1"/>
    <property type="molecule type" value="Genomic_DNA"/>
</dbReference>
<dbReference type="RefSeq" id="WP_005292565.1">
    <property type="nucleotide sequence ID" value="NC_007164.1"/>
</dbReference>
<dbReference type="SMR" id="Q4JYF5"/>
<dbReference type="STRING" id="306537.jk0003"/>
<dbReference type="GeneID" id="92737481"/>
<dbReference type="KEGG" id="cjk:jk0003"/>
<dbReference type="eggNOG" id="COG1195">
    <property type="taxonomic scope" value="Bacteria"/>
</dbReference>
<dbReference type="HOGENOM" id="CLU_040267_1_1_11"/>
<dbReference type="OrthoDB" id="9803889at2"/>
<dbReference type="Proteomes" id="UP000000545">
    <property type="component" value="Chromosome"/>
</dbReference>
<dbReference type="GO" id="GO:0005737">
    <property type="term" value="C:cytoplasm"/>
    <property type="evidence" value="ECO:0007669"/>
    <property type="project" value="UniProtKB-SubCell"/>
</dbReference>
<dbReference type="GO" id="GO:0005524">
    <property type="term" value="F:ATP binding"/>
    <property type="evidence" value="ECO:0007669"/>
    <property type="project" value="UniProtKB-UniRule"/>
</dbReference>
<dbReference type="GO" id="GO:0003697">
    <property type="term" value="F:single-stranded DNA binding"/>
    <property type="evidence" value="ECO:0007669"/>
    <property type="project" value="UniProtKB-UniRule"/>
</dbReference>
<dbReference type="GO" id="GO:0006260">
    <property type="term" value="P:DNA replication"/>
    <property type="evidence" value="ECO:0007669"/>
    <property type="project" value="UniProtKB-UniRule"/>
</dbReference>
<dbReference type="GO" id="GO:0000731">
    <property type="term" value="P:DNA synthesis involved in DNA repair"/>
    <property type="evidence" value="ECO:0007669"/>
    <property type="project" value="TreeGrafter"/>
</dbReference>
<dbReference type="GO" id="GO:0006302">
    <property type="term" value="P:double-strand break repair"/>
    <property type="evidence" value="ECO:0007669"/>
    <property type="project" value="TreeGrafter"/>
</dbReference>
<dbReference type="GO" id="GO:0009432">
    <property type="term" value="P:SOS response"/>
    <property type="evidence" value="ECO:0007669"/>
    <property type="project" value="UniProtKB-UniRule"/>
</dbReference>
<dbReference type="Gene3D" id="3.40.50.300">
    <property type="entry name" value="P-loop containing nucleotide triphosphate hydrolases"/>
    <property type="match status" value="1"/>
</dbReference>
<dbReference type="Gene3D" id="1.20.1050.90">
    <property type="entry name" value="RecF/RecN/SMC, N-terminal domain"/>
    <property type="match status" value="1"/>
</dbReference>
<dbReference type="HAMAP" id="MF_00365">
    <property type="entry name" value="RecF"/>
    <property type="match status" value="1"/>
</dbReference>
<dbReference type="InterPro" id="IPR001238">
    <property type="entry name" value="DNA-binding_RecF"/>
</dbReference>
<dbReference type="InterPro" id="IPR018078">
    <property type="entry name" value="DNA-binding_RecF_CS"/>
</dbReference>
<dbReference type="InterPro" id="IPR027417">
    <property type="entry name" value="P-loop_NTPase"/>
</dbReference>
<dbReference type="InterPro" id="IPR003395">
    <property type="entry name" value="RecF/RecN/SMC_N"/>
</dbReference>
<dbReference type="InterPro" id="IPR042174">
    <property type="entry name" value="RecF_2"/>
</dbReference>
<dbReference type="NCBIfam" id="TIGR00611">
    <property type="entry name" value="recf"/>
    <property type="match status" value="1"/>
</dbReference>
<dbReference type="PANTHER" id="PTHR32182">
    <property type="entry name" value="DNA REPLICATION AND REPAIR PROTEIN RECF"/>
    <property type="match status" value="1"/>
</dbReference>
<dbReference type="PANTHER" id="PTHR32182:SF0">
    <property type="entry name" value="DNA REPLICATION AND REPAIR PROTEIN RECF"/>
    <property type="match status" value="1"/>
</dbReference>
<dbReference type="Pfam" id="PF02463">
    <property type="entry name" value="SMC_N"/>
    <property type="match status" value="1"/>
</dbReference>
<dbReference type="SUPFAM" id="SSF52540">
    <property type="entry name" value="P-loop containing nucleoside triphosphate hydrolases"/>
    <property type="match status" value="1"/>
</dbReference>
<dbReference type="PROSITE" id="PS00617">
    <property type="entry name" value="RECF_1"/>
    <property type="match status" value="1"/>
</dbReference>
<dbReference type="PROSITE" id="PS00618">
    <property type="entry name" value="RECF_2"/>
    <property type="match status" value="1"/>
</dbReference>
<protein>
    <recommendedName>
        <fullName evidence="1">DNA replication and repair protein RecF</fullName>
    </recommendedName>
</protein>
<sequence>MYVSNLRLSNYRSWEELDLQLSPGITIFSGPNGHGKTNIVEALGYLAHLSSHRVNSDAALVRRGEEIANISATAVNNGRELTAHLAIRARGSNRAHINRAAMNSQRDLLGVVRTTLFSPEDLALIRGEPEQRRHFLDAIMVARYPRLAAVKADYDKALRQRNALLRQSAFALRLVVGAPKGASHNLSEDIKADAESALATLDVWDSQLAALGAQIMSARVQIVHDLAPHLQQTYQSLAPQSRPAHMSYTSTIDVELADLGIRLGVSEPNQPTALLSPEIAEATLLQAFANKRPQEVERGTTLLGPHRDDVNLILGHQPAKGYASHGESWSFALSLRLAAFFMQRGDGVEPVVILDDVFAELDSSRRQHLVDLISSAEQVLITAAVDEDIPEALRDVAKIYTIDELKNSALSTAERAVKDGEADGD</sequence>
<proteinExistence type="inferred from homology"/>
<organism>
    <name type="scientific">Corynebacterium jeikeium (strain K411)</name>
    <dbReference type="NCBI Taxonomy" id="306537"/>
    <lineage>
        <taxon>Bacteria</taxon>
        <taxon>Bacillati</taxon>
        <taxon>Actinomycetota</taxon>
        <taxon>Actinomycetes</taxon>
        <taxon>Mycobacteriales</taxon>
        <taxon>Corynebacteriaceae</taxon>
        <taxon>Corynebacterium</taxon>
    </lineage>
</organism>
<name>RECF_CORJK</name>
<accession>Q4JYF5</accession>
<feature type="chain" id="PRO_0000236116" description="DNA replication and repair protein RecF">
    <location>
        <begin position="1"/>
        <end position="425"/>
    </location>
</feature>
<feature type="binding site" evidence="1">
    <location>
        <begin position="30"/>
        <end position="37"/>
    </location>
    <ligand>
        <name>ATP</name>
        <dbReference type="ChEBI" id="CHEBI:30616"/>
    </ligand>
</feature>